<sequence>MTTSKIATAFKTATFALAAGAVALGLASPADAAAGTMYGDPAAAAKYWRQQTYDDCVLMSAADVIGQVTGREPSERAIIKVAQSTPSVVHPGSIYTKPADAEHPNSGMGTSVADIPTLLAHYGVDAVITDEDHATATGVATGMAALEQYLGSGHAVIVSINAEMIWGQPVEETDSAGNPRSDHAVVVTGVDTENGIVHLNDSGTPTGRDEQIPMETFVEAWATSHDFMAVTT</sequence>
<evidence type="ECO:0000255" key="1"/>
<keyword id="KW-1185">Reference proteome</keyword>
<keyword id="KW-0732">Signal</keyword>
<dbReference type="EMBL" id="AE000516">
    <property type="protein sequence ID" value="AAK45566.1"/>
    <property type="molecule type" value="Genomic_DNA"/>
</dbReference>
<dbReference type="PIR" id="D70754">
    <property type="entry name" value="D70754"/>
</dbReference>
<dbReference type="RefSeq" id="WP_003898800.1">
    <property type="nucleotide sequence ID" value="NZ_KK341227.1"/>
</dbReference>
<dbReference type="SMR" id="P9WM46"/>
<dbReference type="KEGG" id="mtc:MT1306"/>
<dbReference type="PATRIC" id="fig|83331.31.peg.1411"/>
<dbReference type="HOGENOM" id="CLU_096071_0_0_11"/>
<dbReference type="Proteomes" id="UP000001020">
    <property type="component" value="Chromosome"/>
</dbReference>
<dbReference type="Gene3D" id="3.90.70.10">
    <property type="entry name" value="Cysteine proteinases"/>
    <property type="match status" value="1"/>
</dbReference>
<dbReference type="InterPro" id="IPR025660">
    <property type="entry name" value="Pept_his_AS"/>
</dbReference>
<dbReference type="InterPro" id="IPR039564">
    <property type="entry name" value="Peptidase_C39-like"/>
</dbReference>
<dbReference type="Pfam" id="PF13529">
    <property type="entry name" value="Peptidase_C39_2"/>
    <property type="match status" value="1"/>
</dbReference>
<protein>
    <recommendedName>
        <fullName>Uncharacterized protein MT1306</fullName>
    </recommendedName>
</protein>
<feature type="signal peptide" evidence="1">
    <location>
        <begin position="1"/>
        <end position="32"/>
    </location>
</feature>
<feature type="chain" id="PRO_0000427367" description="Uncharacterized protein MT1306">
    <location>
        <begin position="33"/>
        <end position="232"/>
    </location>
</feature>
<accession>P9WM46</accession>
<accession>L0T8W0</accession>
<accession>P64791</accession>
<accession>Q11051</accession>
<reference key="1">
    <citation type="journal article" date="2002" name="J. Bacteriol.">
        <title>Whole-genome comparison of Mycobacterium tuberculosis clinical and laboratory strains.</title>
        <authorList>
            <person name="Fleischmann R.D."/>
            <person name="Alland D."/>
            <person name="Eisen J.A."/>
            <person name="Carpenter L."/>
            <person name="White O."/>
            <person name="Peterson J.D."/>
            <person name="DeBoy R.T."/>
            <person name="Dodson R.J."/>
            <person name="Gwinn M.L."/>
            <person name="Haft D.H."/>
            <person name="Hickey E.K."/>
            <person name="Kolonay J.F."/>
            <person name="Nelson W.C."/>
            <person name="Umayam L.A."/>
            <person name="Ermolaeva M.D."/>
            <person name="Salzberg S.L."/>
            <person name="Delcher A."/>
            <person name="Utterback T.R."/>
            <person name="Weidman J.F."/>
            <person name="Khouri H.M."/>
            <person name="Gill J."/>
            <person name="Mikula A."/>
            <person name="Bishai W."/>
            <person name="Jacobs W.R. Jr."/>
            <person name="Venter J.C."/>
            <person name="Fraser C.M."/>
        </authorList>
    </citation>
    <scope>NUCLEOTIDE SEQUENCE [LARGE SCALE GENOMIC DNA]</scope>
    <source>
        <strain>CDC 1551 / Oshkosh</strain>
    </source>
</reference>
<organism>
    <name type="scientific">Mycobacterium tuberculosis (strain CDC 1551 / Oshkosh)</name>
    <dbReference type="NCBI Taxonomy" id="83331"/>
    <lineage>
        <taxon>Bacteria</taxon>
        <taxon>Bacillati</taxon>
        <taxon>Actinomycetota</taxon>
        <taxon>Actinomycetes</taxon>
        <taxon>Mycobacteriales</taxon>
        <taxon>Mycobacteriaceae</taxon>
        <taxon>Mycobacterium</taxon>
        <taxon>Mycobacterium tuberculosis complex</taxon>
    </lineage>
</organism>
<name>Y1268_MYCTO</name>
<gene>
    <name type="ordered locus">MT1306</name>
</gene>
<proteinExistence type="inferred from homology"/>